<name>FLAE_METVO</name>
<reference key="1">
    <citation type="submission" date="1997-04" db="EMBL/GenBank/DDBJ databases">
        <authorList>
            <person name="Bayley D.P."/>
            <person name="Jarrell K.F."/>
        </authorList>
    </citation>
    <scope>NUCLEOTIDE SEQUENCE [GENOMIC DNA]</scope>
    <source>
        <strain>ATCC 33273 / DSM 1537 / NBRC 100457 / OCM 70 / PS</strain>
    </source>
</reference>
<evidence type="ECO:0000305" key="1"/>
<comment type="subcellular location">
    <subcellularLocation>
        <location evidence="1">Archaeal flagellum</location>
    </subcellularLocation>
</comment>
<comment type="similarity">
    <text evidence="1">To M.jannaschii FlaE, also to FlaD.</text>
</comment>
<accession>O06638</accession>
<dbReference type="EMBL" id="U97040">
    <property type="protein sequence ID" value="AAB57829.1"/>
    <property type="molecule type" value="Genomic_DNA"/>
</dbReference>
<dbReference type="PIR" id="T44950">
    <property type="entry name" value="T44950"/>
</dbReference>
<dbReference type="SMR" id="O06638"/>
<dbReference type="OrthoDB" id="121879at2157"/>
<dbReference type="GO" id="GO:0097589">
    <property type="term" value="C:archaeal-type flagellum"/>
    <property type="evidence" value="ECO:0007669"/>
    <property type="project" value="UniProtKB-SubCell"/>
</dbReference>
<dbReference type="GO" id="GO:0097588">
    <property type="term" value="P:archaeal or bacterial-type flagellum-dependent cell motility"/>
    <property type="evidence" value="ECO:0007669"/>
    <property type="project" value="InterPro"/>
</dbReference>
<dbReference type="InterPro" id="IPR006752">
    <property type="entry name" value="Arch_fla_DE"/>
</dbReference>
<dbReference type="InterPro" id="IPR052494">
    <property type="entry name" value="Flagella_assembly_related"/>
</dbReference>
<dbReference type="PANTHER" id="PTHR40698:SF1">
    <property type="entry name" value="FLAGELLA-RELATED PROTEIN D-RELATED"/>
    <property type="match status" value="1"/>
</dbReference>
<dbReference type="PANTHER" id="PTHR40698">
    <property type="entry name" value="FLAGELLA-RELATED PROTEIN E-RELATED-RELATED"/>
    <property type="match status" value="1"/>
</dbReference>
<dbReference type="Pfam" id="PF04659">
    <property type="entry name" value="Arch_fla_DE"/>
    <property type="match status" value="1"/>
</dbReference>
<keyword id="KW-0974">Archaeal flagellum</keyword>
<proteinExistence type="predicted"/>
<organism>
    <name type="scientific">Methanococcus voltae</name>
    <dbReference type="NCBI Taxonomy" id="2188"/>
    <lineage>
        <taxon>Archaea</taxon>
        <taxon>Methanobacteriati</taxon>
        <taxon>Methanobacteriota</taxon>
        <taxon>Methanomada group</taxon>
        <taxon>Methanococci</taxon>
        <taxon>Methanococcales</taxon>
        <taxon>Methanococcaceae</taxon>
        <taxon>Methanococcus</taxon>
    </lineage>
</organism>
<feature type="chain" id="PRO_0000087272" description="Putative flagella-related protein E">
    <location>
        <begin position="1"/>
        <end position="135"/>
    </location>
</feature>
<sequence>MNTATLSSILLESHKPAKLETIPEDSYSSIFVFKWLEYLCERVGHSNVPDVLEFYYNLGWVSDKAIAKLLKFSKGIGLDDDEIETSVGKLTIADHLVSLLFIERLNGKKVSSEALDKLEWEIRRIKKGAEQYYGI</sequence>
<protein>
    <recommendedName>
        <fullName>Putative flagella-related protein E</fullName>
    </recommendedName>
</protein>
<gene>
    <name type="primary">flaE</name>
</gene>